<accession>A1BH19</accession>
<protein>
    <recommendedName>
        <fullName evidence="1">Large ribosomal subunit protein bL25</fullName>
    </recommendedName>
    <alternativeName>
        <fullName evidence="2">50S ribosomal protein L25</fullName>
    </alternativeName>
    <alternativeName>
        <fullName evidence="1">General stress protein CTC</fullName>
    </alternativeName>
</protein>
<keyword id="KW-1185">Reference proteome</keyword>
<keyword id="KW-0687">Ribonucleoprotein</keyword>
<keyword id="KW-0689">Ribosomal protein</keyword>
<keyword id="KW-0694">RNA-binding</keyword>
<keyword id="KW-0699">rRNA-binding</keyword>
<organism>
    <name type="scientific">Chlorobium phaeobacteroides (strain DSM 266 / SMG 266 / 2430)</name>
    <dbReference type="NCBI Taxonomy" id="290317"/>
    <lineage>
        <taxon>Bacteria</taxon>
        <taxon>Pseudomonadati</taxon>
        <taxon>Chlorobiota</taxon>
        <taxon>Chlorobiia</taxon>
        <taxon>Chlorobiales</taxon>
        <taxon>Chlorobiaceae</taxon>
        <taxon>Chlorobium/Pelodictyon group</taxon>
        <taxon>Chlorobium</taxon>
    </lineage>
</organism>
<feature type="chain" id="PRO_1000052882" description="Large ribosomal subunit protein bL25">
    <location>
        <begin position="1"/>
        <end position="198"/>
    </location>
</feature>
<name>RL25_CHLPD</name>
<reference key="1">
    <citation type="submission" date="2006-12" db="EMBL/GenBank/DDBJ databases">
        <title>Complete sequence of Chlorobium phaeobacteroides DSM 266.</title>
        <authorList>
            <consortium name="US DOE Joint Genome Institute"/>
            <person name="Copeland A."/>
            <person name="Lucas S."/>
            <person name="Lapidus A."/>
            <person name="Barry K."/>
            <person name="Detter J.C."/>
            <person name="Glavina del Rio T."/>
            <person name="Hammon N."/>
            <person name="Israni S."/>
            <person name="Pitluck S."/>
            <person name="Goltsman E."/>
            <person name="Schmutz J."/>
            <person name="Larimer F."/>
            <person name="Land M."/>
            <person name="Hauser L."/>
            <person name="Mikhailova N."/>
            <person name="Li T."/>
            <person name="Overmann J."/>
            <person name="Bryant D.A."/>
            <person name="Richardson P."/>
        </authorList>
    </citation>
    <scope>NUCLEOTIDE SEQUENCE [LARGE SCALE GENOMIC DNA]</scope>
    <source>
        <strain>DSM 266 / SMG 266 / 2430</strain>
    </source>
</reference>
<gene>
    <name evidence="1" type="primary">rplY</name>
    <name evidence="1" type="synonym">ctc</name>
    <name type="ordered locus">Cpha266_1675</name>
</gene>
<dbReference type="EMBL" id="CP000492">
    <property type="protein sequence ID" value="ABL65696.1"/>
    <property type="molecule type" value="Genomic_DNA"/>
</dbReference>
<dbReference type="RefSeq" id="WP_011745505.1">
    <property type="nucleotide sequence ID" value="NC_008639.1"/>
</dbReference>
<dbReference type="SMR" id="A1BH19"/>
<dbReference type="STRING" id="290317.Cpha266_1675"/>
<dbReference type="KEGG" id="cph:Cpha266_1675"/>
<dbReference type="eggNOG" id="COG1825">
    <property type="taxonomic scope" value="Bacteria"/>
</dbReference>
<dbReference type="HOGENOM" id="CLU_075939_2_1_10"/>
<dbReference type="OrthoDB" id="9786489at2"/>
<dbReference type="Proteomes" id="UP000008701">
    <property type="component" value="Chromosome"/>
</dbReference>
<dbReference type="GO" id="GO:0022625">
    <property type="term" value="C:cytosolic large ribosomal subunit"/>
    <property type="evidence" value="ECO:0007669"/>
    <property type="project" value="TreeGrafter"/>
</dbReference>
<dbReference type="GO" id="GO:0008097">
    <property type="term" value="F:5S rRNA binding"/>
    <property type="evidence" value="ECO:0007669"/>
    <property type="project" value="InterPro"/>
</dbReference>
<dbReference type="GO" id="GO:0003735">
    <property type="term" value="F:structural constituent of ribosome"/>
    <property type="evidence" value="ECO:0007669"/>
    <property type="project" value="InterPro"/>
</dbReference>
<dbReference type="GO" id="GO:0006412">
    <property type="term" value="P:translation"/>
    <property type="evidence" value="ECO:0007669"/>
    <property type="project" value="UniProtKB-UniRule"/>
</dbReference>
<dbReference type="CDD" id="cd00495">
    <property type="entry name" value="Ribosomal_L25_TL5_CTC"/>
    <property type="match status" value="1"/>
</dbReference>
<dbReference type="Gene3D" id="2.170.120.20">
    <property type="entry name" value="Ribosomal protein L25, beta domain"/>
    <property type="match status" value="1"/>
</dbReference>
<dbReference type="Gene3D" id="2.40.240.10">
    <property type="entry name" value="Ribosomal Protein L25, Chain P"/>
    <property type="match status" value="1"/>
</dbReference>
<dbReference type="HAMAP" id="MF_01334">
    <property type="entry name" value="Ribosomal_bL25_CTC"/>
    <property type="match status" value="1"/>
</dbReference>
<dbReference type="InterPro" id="IPR020056">
    <property type="entry name" value="Rbsml_bL25/Gln-tRNA_synth_N"/>
</dbReference>
<dbReference type="InterPro" id="IPR011035">
    <property type="entry name" value="Ribosomal_bL25/Gln-tRNA_synth"/>
</dbReference>
<dbReference type="InterPro" id="IPR020057">
    <property type="entry name" value="Ribosomal_bL25_b-dom"/>
</dbReference>
<dbReference type="InterPro" id="IPR037121">
    <property type="entry name" value="Ribosomal_bL25_C"/>
</dbReference>
<dbReference type="InterPro" id="IPR001021">
    <property type="entry name" value="Ribosomal_bL25_long"/>
</dbReference>
<dbReference type="InterPro" id="IPR029751">
    <property type="entry name" value="Ribosomal_L25_dom"/>
</dbReference>
<dbReference type="InterPro" id="IPR020930">
    <property type="entry name" value="Ribosomal_uL5_bac-type"/>
</dbReference>
<dbReference type="NCBIfam" id="TIGR00731">
    <property type="entry name" value="bL25_bact_ctc"/>
    <property type="match status" value="1"/>
</dbReference>
<dbReference type="NCBIfam" id="NF004136">
    <property type="entry name" value="PRK05618.3-2"/>
    <property type="match status" value="1"/>
</dbReference>
<dbReference type="PANTHER" id="PTHR33284">
    <property type="entry name" value="RIBOSOMAL PROTEIN L25/GLN-TRNA SYNTHETASE, ANTI-CODON-BINDING DOMAIN-CONTAINING PROTEIN"/>
    <property type="match status" value="1"/>
</dbReference>
<dbReference type="PANTHER" id="PTHR33284:SF1">
    <property type="entry name" value="RIBOSOMAL PROTEIN L25_GLN-TRNA SYNTHETASE, ANTI-CODON-BINDING DOMAIN-CONTAINING PROTEIN"/>
    <property type="match status" value="1"/>
</dbReference>
<dbReference type="Pfam" id="PF01386">
    <property type="entry name" value="Ribosomal_L25p"/>
    <property type="match status" value="1"/>
</dbReference>
<dbReference type="Pfam" id="PF14693">
    <property type="entry name" value="Ribosomal_TL5_C"/>
    <property type="match status" value="1"/>
</dbReference>
<dbReference type="SUPFAM" id="SSF50715">
    <property type="entry name" value="Ribosomal protein L25-like"/>
    <property type="match status" value="1"/>
</dbReference>
<proteinExistence type="inferred from homology"/>
<comment type="function">
    <text evidence="1">This is one of the proteins that binds to the 5S RNA in the ribosome where it forms part of the central protuberance.</text>
</comment>
<comment type="subunit">
    <text evidence="1">Part of the 50S ribosomal subunit; part of the 5S rRNA/L5/L18/L25 subcomplex. Contacts the 5S rRNA. Binds to the 5S rRNA independently of L5 and L18.</text>
</comment>
<comment type="similarity">
    <text evidence="1">Belongs to the bacterial ribosomal protein bL25 family. CTC subfamily.</text>
</comment>
<sequence>MEIIALGVEPRIIRKKEAAKLRKTGIVPAVIYHKGEETISVSVNEIALKKLVHSAESHIIDLKFPDGKTVRSFIKDVQFDPVTDRIIHTDFQLFSADELVEMDVPVGTTGDAVGVEKGGRIQIIKHALTLKGMPADMPDHFLIDCTNLEIGHSIHVREIPMDARPGLTIMDDPDTPVVTIVAPKKEAEPAAETAVSAS</sequence>
<evidence type="ECO:0000255" key="1">
    <source>
        <dbReference type="HAMAP-Rule" id="MF_01334"/>
    </source>
</evidence>
<evidence type="ECO:0000305" key="2"/>